<sequence>MSLPMLQVALDNQTMDSAYETTRLIAEEVDIIEVGTILCVGEGVRAVRDLKALYPHKIVLADAKIADAGKILSRMCFEANADWVTVICCADINTAKGALDVAKEFNGDVQIELTGYWTWEQAQQWRDAGIQQVVYHRSRDAQAAGVAWGEADITAIKRLSDMGFKVTVTGGLALEDLPLFKGIPIHVFIAGRSIRDAASPVEAARQFKRSIAELWG</sequence>
<comment type="function">
    <text evidence="1">Catalyzes the decarboxylation of 3-keto-L-gulonate-6-P into L-xylulose-5-P. Is involved in the anaerobic L-ascorbate utilization.</text>
</comment>
<comment type="catalytic activity">
    <reaction evidence="1">
        <text>3-dehydro-L-gulonate 6-phosphate + H(+) = L-xylulose 5-phosphate + CO2</text>
        <dbReference type="Rhea" id="RHEA:14353"/>
        <dbReference type="ChEBI" id="CHEBI:15378"/>
        <dbReference type="ChEBI" id="CHEBI:16526"/>
        <dbReference type="ChEBI" id="CHEBI:57829"/>
        <dbReference type="ChEBI" id="CHEBI:58774"/>
        <dbReference type="EC" id="4.1.1.85"/>
    </reaction>
</comment>
<comment type="cofactor">
    <cofactor evidence="1">
        <name>Mg(2+)</name>
        <dbReference type="ChEBI" id="CHEBI:18420"/>
    </cofactor>
    <text evidence="1">Binds 1 Mg(2+) ion per subunit.</text>
</comment>
<comment type="pathway">
    <text evidence="1">Cofactor degradation; L-ascorbate degradation; D-xylulose 5-phosphate from L-ascorbate: step 2/4.</text>
</comment>
<comment type="subunit">
    <text evidence="1">Homodimer.</text>
</comment>
<comment type="induction">
    <text evidence="1">Induced by L-ascorbate. Repressed by UlaR.</text>
</comment>
<comment type="similarity">
    <text evidence="1">Belongs to the HPS/KGPDC family. KGPDC subfamily.</text>
</comment>
<name>ULAD_ECO24</name>
<keyword id="KW-0119">Carbohydrate metabolism</keyword>
<keyword id="KW-0210">Decarboxylase</keyword>
<keyword id="KW-0456">Lyase</keyword>
<keyword id="KW-0460">Magnesium</keyword>
<keyword id="KW-0479">Metal-binding</keyword>
<keyword id="KW-1185">Reference proteome</keyword>
<protein>
    <recommendedName>
        <fullName evidence="1">3-keto-L-gulonate-6-phosphate decarboxylase UlaD</fullName>
        <ecNumber evidence="1">4.1.1.85</ecNumber>
    </recommendedName>
    <alternativeName>
        <fullName evidence="1">3-dehydro-L-gulonate-6-phosphate decarboxylase</fullName>
    </alternativeName>
    <alternativeName>
        <fullName evidence="1">KGPDC</fullName>
    </alternativeName>
    <alternativeName>
        <fullName evidence="1">L-ascorbate utilization protein D</fullName>
    </alternativeName>
</protein>
<feature type="chain" id="PRO_1000067318" description="3-keto-L-gulonate-6-phosphate decarboxylase UlaD">
    <location>
        <begin position="1"/>
        <end position="216"/>
    </location>
</feature>
<feature type="binding site" evidence="1">
    <location>
        <position position="11"/>
    </location>
    <ligand>
        <name>substrate</name>
    </ligand>
</feature>
<feature type="binding site" evidence="1">
    <location>
        <position position="33"/>
    </location>
    <ligand>
        <name>Mg(2+)</name>
        <dbReference type="ChEBI" id="CHEBI:18420"/>
    </ligand>
</feature>
<feature type="binding site" evidence="1">
    <location>
        <position position="62"/>
    </location>
    <ligand>
        <name>Mg(2+)</name>
        <dbReference type="ChEBI" id="CHEBI:18420"/>
    </ligand>
</feature>
<feature type="binding site" evidence="1">
    <location>
        <position position="192"/>
    </location>
    <ligand>
        <name>substrate</name>
    </ligand>
</feature>
<feature type="site" description="Transition state stabilizer" evidence="1">
    <location>
        <position position="64"/>
    </location>
</feature>
<feature type="site" description="Transition state stabilizer" evidence="1">
    <location>
        <position position="67"/>
    </location>
</feature>
<evidence type="ECO:0000255" key="1">
    <source>
        <dbReference type="HAMAP-Rule" id="MF_01267"/>
    </source>
</evidence>
<dbReference type="EC" id="4.1.1.85" evidence="1"/>
<dbReference type="EMBL" id="CP000800">
    <property type="protein sequence ID" value="ABV17772.1"/>
    <property type="molecule type" value="Genomic_DNA"/>
</dbReference>
<dbReference type="RefSeq" id="WP_000056760.1">
    <property type="nucleotide sequence ID" value="NC_009801.1"/>
</dbReference>
<dbReference type="SMR" id="A7ZV66"/>
<dbReference type="GeneID" id="75202430"/>
<dbReference type="KEGG" id="ecw:EcE24377A_4757"/>
<dbReference type="HOGENOM" id="CLU_081825_0_0_6"/>
<dbReference type="UniPathway" id="UPA00263">
    <property type="reaction ID" value="UER00378"/>
</dbReference>
<dbReference type="Proteomes" id="UP000001122">
    <property type="component" value="Chromosome"/>
</dbReference>
<dbReference type="GO" id="GO:0033982">
    <property type="term" value="F:3-dehydro-L-gulonate-6-phosphate decarboxylase activity"/>
    <property type="evidence" value="ECO:0007669"/>
    <property type="project" value="UniProtKB-EC"/>
</dbReference>
<dbReference type="GO" id="GO:0000287">
    <property type="term" value="F:magnesium ion binding"/>
    <property type="evidence" value="ECO:0007669"/>
    <property type="project" value="UniProtKB-UniRule"/>
</dbReference>
<dbReference type="GO" id="GO:0004590">
    <property type="term" value="F:orotidine-5'-phosphate decarboxylase activity"/>
    <property type="evidence" value="ECO:0007669"/>
    <property type="project" value="InterPro"/>
</dbReference>
<dbReference type="GO" id="GO:0006207">
    <property type="term" value="P:'de novo' pyrimidine nucleobase biosynthetic process"/>
    <property type="evidence" value="ECO:0007669"/>
    <property type="project" value="InterPro"/>
</dbReference>
<dbReference type="GO" id="GO:0019854">
    <property type="term" value="P:L-ascorbic acid catabolic process"/>
    <property type="evidence" value="ECO:0007669"/>
    <property type="project" value="UniProtKB-UniRule"/>
</dbReference>
<dbReference type="CDD" id="cd04726">
    <property type="entry name" value="KGPDC_HPS"/>
    <property type="match status" value="1"/>
</dbReference>
<dbReference type="FunFam" id="3.20.20.70:FF:000022">
    <property type="entry name" value="3-keto-L-gulonate-6-phosphate decarboxylase UlaD"/>
    <property type="match status" value="1"/>
</dbReference>
<dbReference type="Gene3D" id="3.20.20.70">
    <property type="entry name" value="Aldolase class I"/>
    <property type="match status" value="1"/>
</dbReference>
<dbReference type="HAMAP" id="MF_01267">
    <property type="entry name" value="UlaD"/>
    <property type="match status" value="1"/>
</dbReference>
<dbReference type="InterPro" id="IPR023942">
    <property type="entry name" value="3-keto-L-gulonate6Pdecase_UlaD"/>
</dbReference>
<dbReference type="InterPro" id="IPR013785">
    <property type="entry name" value="Aldolase_TIM"/>
</dbReference>
<dbReference type="InterPro" id="IPR041710">
    <property type="entry name" value="HPS/KGPDC"/>
</dbReference>
<dbReference type="InterPro" id="IPR001754">
    <property type="entry name" value="OMPdeCOase_dom"/>
</dbReference>
<dbReference type="InterPro" id="IPR011060">
    <property type="entry name" value="RibuloseP-bd_barrel"/>
</dbReference>
<dbReference type="NCBIfam" id="NF009832">
    <property type="entry name" value="PRK13306.1"/>
    <property type="match status" value="1"/>
</dbReference>
<dbReference type="PANTHER" id="PTHR35039">
    <property type="entry name" value="3-KETO-L-GULONATE-6-PHOSPHATE DECARBOXYLASE SGBH-RELATED"/>
    <property type="match status" value="1"/>
</dbReference>
<dbReference type="PANTHER" id="PTHR35039:SF3">
    <property type="entry name" value="3-KETO-L-GULONATE-6-PHOSPHATE DECARBOXYLASE SGBH-RELATED"/>
    <property type="match status" value="1"/>
</dbReference>
<dbReference type="Pfam" id="PF00215">
    <property type="entry name" value="OMPdecase"/>
    <property type="match status" value="1"/>
</dbReference>
<dbReference type="SMART" id="SM00934">
    <property type="entry name" value="OMPdecase"/>
    <property type="match status" value="1"/>
</dbReference>
<dbReference type="SUPFAM" id="SSF51366">
    <property type="entry name" value="Ribulose-phoshate binding barrel"/>
    <property type="match status" value="1"/>
</dbReference>
<accession>A7ZV66</accession>
<proteinExistence type="inferred from homology"/>
<gene>
    <name evidence="1" type="primary">ulaD</name>
    <name type="ordered locus">EcE24377A_4757</name>
</gene>
<organism>
    <name type="scientific">Escherichia coli O139:H28 (strain E24377A / ETEC)</name>
    <dbReference type="NCBI Taxonomy" id="331111"/>
    <lineage>
        <taxon>Bacteria</taxon>
        <taxon>Pseudomonadati</taxon>
        <taxon>Pseudomonadota</taxon>
        <taxon>Gammaproteobacteria</taxon>
        <taxon>Enterobacterales</taxon>
        <taxon>Enterobacteriaceae</taxon>
        <taxon>Escherichia</taxon>
    </lineage>
</organism>
<reference key="1">
    <citation type="journal article" date="2008" name="J. Bacteriol.">
        <title>The pangenome structure of Escherichia coli: comparative genomic analysis of E. coli commensal and pathogenic isolates.</title>
        <authorList>
            <person name="Rasko D.A."/>
            <person name="Rosovitz M.J."/>
            <person name="Myers G.S.A."/>
            <person name="Mongodin E.F."/>
            <person name="Fricke W.F."/>
            <person name="Gajer P."/>
            <person name="Crabtree J."/>
            <person name="Sebaihia M."/>
            <person name="Thomson N.R."/>
            <person name="Chaudhuri R."/>
            <person name="Henderson I.R."/>
            <person name="Sperandio V."/>
            <person name="Ravel J."/>
        </authorList>
    </citation>
    <scope>NUCLEOTIDE SEQUENCE [LARGE SCALE GENOMIC DNA]</scope>
    <source>
        <strain>E24377A / ETEC</strain>
    </source>
</reference>